<name>NDK6_RAT</name>
<dbReference type="EC" id="2.7.4.6"/>
<dbReference type="EMBL" id="AF051943">
    <property type="protein sequence ID" value="AAC78465.1"/>
    <property type="molecule type" value="mRNA"/>
</dbReference>
<dbReference type="SMR" id="O88426"/>
<dbReference type="FunCoup" id="O88426">
    <property type="interactions" value="2353"/>
</dbReference>
<dbReference type="STRING" id="10116.ENSRNOP00000028125"/>
<dbReference type="PhosphoSitePlus" id="O88426"/>
<dbReference type="PaxDb" id="10116-ENSRNOP00000028125"/>
<dbReference type="UCSC" id="RGD:61896">
    <property type="organism name" value="rat"/>
</dbReference>
<dbReference type="AGR" id="RGD:61896"/>
<dbReference type="RGD" id="61896">
    <property type="gene designation" value="Nme6"/>
</dbReference>
<dbReference type="eggNOG" id="KOG0888">
    <property type="taxonomic scope" value="Eukaryota"/>
</dbReference>
<dbReference type="InParanoid" id="O88426"/>
<dbReference type="Proteomes" id="UP000002494">
    <property type="component" value="Unplaced"/>
</dbReference>
<dbReference type="GO" id="GO:0005743">
    <property type="term" value="C:mitochondrial inner membrane"/>
    <property type="evidence" value="ECO:0000266"/>
    <property type="project" value="RGD"/>
</dbReference>
<dbReference type="GO" id="GO:0005759">
    <property type="term" value="C:mitochondrial matrix"/>
    <property type="evidence" value="ECO:0000266"/>
    <property type="project" value="RGD"/>
</dbReference>
<dbReference type="GO" id="GO:0005739">
    <property type="term" value="C:mitochondrion"/>
    <property type="evidence" value="ECO:0000266"/>
    <property type="project" value="RGD"/>
</dbReference>
<dbReference type="GO" id="GO:0005524">
    <property type="term" value="F:ATP binding"/>
    <property type="evidence" value="ECO:0007669"/>
    <property type="project" value="UniProtKB-KW"/>
</dbReference>
<dbReference type="GO" id="GO:0046872">
    <property type="term" value="F:metal ion binding"/>
    <property type="evidence" value="ECO:0007669"/>
    <property type="project" value="UniProtKB-KW"/>
</dbReference>
<dbReference type="GO" id="GO:0004550">
    <property type="term" value="F:nucleoside diphosphate kinase activity"/>
    <property type="evidence" value="ECO:0000266"/>
    <property type="project" value="RGD"/>
</dbReference>
<dbReference type="GO" id="GO:0006241">
    <property type="term" value="P:CTP biosynthetic process"/>
    <property type="evidence" value="ECO:0007669"/>
    <property type="project" value="InterPro"/>
</dbReference>
<dbReference type="GO" id="GO:0006183">
    <property type="term" value="P:GTP biosynthetic process"/>
    <property type="evidence" value="ECO:0007669"/>
    <property type="project" value="InterPro"/>
</dbReference>
<dbReference type="GO" id="GO:0030308">
    <property type="term" value="P:negative regulation of cell growth"/>
    <property type="evidence" value="ECO:0000266"/>
    <property type="project" value="RGD"/>
</dbReference>
<dbReference type="GO" id="GO:0045839">
    <property type="term" value="P:negative regulation of mitotic nuclear division"/>
    <property type="evidence" value="ECO:0000266"/>
    <property type="project" value="RGD"/>
</dbReference>
<dbReference type="GO" id="GO:0006228">
    <property type="term" value="P:UTP biosynthetic process"/>
    <property type="evidence" value="ECO:0007669"/>
    <property type="project" value="InterPro"/>
</dbReference>
<dbReference type="CDD" id="cd04414">
    <property type="entry name" value="NDPk6"/>
    <property type="match status" value="1"/>
</dbReference>
<dbReference type="FunFam" id="3.30.70.141:FF:000006">
    <property type="entry name" value="Nucleoside diphosphate kinase"/>
    <property type="match status" value="1"/>
</dbReference>
<dbReference type="Gene3D" id="3.30.70.141">
    <property type="entry name" value="Nucleoside diphosphate kinase-like domain"/>
    <property type="match status" value="1"/>
</dbReference>
<dbReference type="InterPro" id="IPR034907">
    <property type="entry name" value="NDK-like_dom"/>
</dbReference>
<dbReference type="InterPro" id="IPR036850">
    <property type="entry name" value="NDK-like_dom_sf"/>
</dbReference>
<dbReference type="InterPro" id="IPR037994">
    <property type="entry name" value="NDPk6"/>
</dbReference>
<dbReference type="InterPro" id="IPR001564">
    <property type="entry name" value="Nucleoside_diP_kinase"/>
</dbReference>
<dbReference type="InterPro" id="IPR023005">
    <property type="entry name" value="Nucleoside_diP_kinase_AS"/>
</dbReference>
<dbReference type="PANTHER" id="PTHR46956">
    <property type="entry name" value="NUCLEOSIDE DIPHOSPHATE KINASE 6"/>
    <property type="match status" value="1"/>
</dbReference>
<dbReference type="PANTHER" id="PTHR46956:SF1">
    <property type="entry name" value="NUCLEOSIDE DIPHOSPHATE KINASE 6"/>
    <property type="match status" value="1"/>
</dbReference>
<dbReference type="Pfam" id="PF00334">
    <property type="entry name" value="NDK"/>
    <property type="match status" value="1"/>
</dbReference>
<dbReference type="PRINTS" id="PR01243">
    <property type="entry name" value="NUCDPKINASE"/>
</dbReference>
<dbReference type="SMART" id="SM00562">
    <property type="entry name" value="NDK"/>
    <property type="match status" value="1"/>
</dbReference>
<dbReference type="SUPFAM" id="SSF54919">
    <property type="entry name" value="Nucleoside diphosphate kinase, NDK"/>
    <property type="match status" value="1"/>
</dbReference>
<dbReference type="PROSITE" id="PS00469">
    <property type="entry name" value="NDPK"/>
    <property type="match status" value="1"/>
</dbReference>
<dbReference type="PROSITE" id="PS51374">
    <property type="entry name" value="NDPK_LIKE"/>
    <property type="match status" value="1"/>
</dbReference>
<organism>
    <name type="scientific">Rattus norvegicus</name>
    <name type="common">Rat</name>
    <dbReference type="NCBI Taxonomy" id="10116"/>
    <lineage>
        <taxon>Eukaryota</taxon>
        <taxon>Metazoa</taxon>
        <taxon>Chordata</taxon>
        <taxon>Craniata</taxon>
        <taxon>Vertebrata</taxon>
        <taxon>Euteleostomi</taxon>
        <taxon>Mammalia</taxon>
        <taxon>Eutheria</taxon>
        <taxon>Euarchontoglires</taxon>
        <taxon>Glires</taxon>
        <taxon>Rodentia</taxon>
        <taxon>Myomorpha</taxon>
        <taxon>Muroidea</taxon>
        <taxon>Muridae</taxon>
        <taxon>Murinae</taxon>
        <taxon>Rattus</taxon>
    </lineage>
</organism>
<comment type="function">
    <text>Major role in the synthesis of nucleoside triphosphates other than ATP. The ATP gamma phosphate is transferred to the NDP beta phosphate via a ping-pong mechanism, using a phosphorylated active-site intermediate.</text>
</comment>
<comment type="catalytic activity">
    <reaction evidence="2">
        <text>a 2'-deoxyribonucleoside 5'-diphosphate + ATP = a 2'-deoxyribonucleoside 5'-triphosphate + ADP</text>
        <dbReference type="Rhea" id="RHEA:44640"/>
        <dbReference type="ChEBI" id="CHEBI:30616"/>
        <dbReference type="ChEBI" id="CHEBI:61560"/>
        <dbReference type="ChEBI" id="CHEBI:73316"/>
        <dbReference type="ChEBI" id="CHEBI:456216"/>
        <dbReference type="EC" id="2.7.4.6"/>
    </reaction>
</comment>
<comment type="catalytic activity">
    <reaction evidence="2">
        <text>a ribonucleoside 5'-diphosphate + ATP = a ribonucleoside 5'-triphosphate + ADP</text>
        <dbReference type="Rhea" id="RHEA:18113"/>
        <dbReference type="ChEBI" id="CHEBI:30616"/>
        <dbReference type="ChEBI" id="CHEBI:57930"/>
        <dbReference type="ChEBI" id="CHEBI:61557"/>
        <dbReference type="ChEBI" id="CHEBI:456216"/>
        <dbReference type="EC" id="2.7.4.6"/>
    </reaction>
</comment>
<comment type="cofactor">
    <cofactor evidence="1">
        <name>Mg(2+)</name>
        <dbReference type="ChEBI" id="CHEBI:18420"/>
    </cofactor>
</comment>
<comment type="similarity">
    <text evidence="3">Belongs to the NDK family.</text>
</comment>
<keyword id="KW-0067">ATP-binding</keyword>
<keyword id="KW-0418">Kinase</keyword>
<keyword id="KW-0460">Magnesium</keyword>
<keyword id="KW-0479">Metal-binding</keyword>
<keyword id="KW-0546">Nucleotide metabolism</keyword>
<keyword id="KW-0547">Nucleotide-binding</keyword>
<keyword id="KW-1185">Reference proteome</keyword>
<keyword id="KW-0808">Transferase</keyword>
<proteinExistence type="evidence at transcript level"/>
<evidence type="ECO:0000250" key="1"/>
<evidence type="ECO:0000255" key="2">
    <source>
        <dbReference type="PROSITE-ProRule" id="PRU10030"/>
    </source>
</evidence>
<evidence type="ECO:0000305" key="3"/>
<protein>
    <recommendedName>
        <fullName>Nucleoside diphosphate kinase 6</fullName>
        <shortName>NDK 6</shortName>
        <shortName>NDP kinase 6</shortName>
        <ecNumber>2.7.4.6</ecNumber>
    </recommendedName>
    <alternativeName>
        <fullName>nm23-R6</fullName>
    </alternativeName>
</protein>
<reference key="1">
    <citation type="journal article" date="1999" name="Hum. Genet.">
        <title>NME6: a new member of the nm23/nucleoside diphosphate kinase gene family located on human chromosome 3p21.3.</title>
        <authorList>
            <person name="Mehus J.G."/>
            <person name="Deloukas P."/>
            <person name="Lambeth D.O."/>
        </authorList>
    </citation>
    <scope>NUCLEOTIDE SEQUENCE [MRNA]</scope>
    <source>
        <tissue>Liver</tissue>
    </source>
</reference>
<accession>O88426</accession>
<gene>
    <name type="primary">Nme6</name>
</gene>
<feature type="chain" id="PRO_0000137129" description="Nucleoside diphosphate kinase 6">
    <location>
        <begin position="1" status="less than"/>
        <end position="175"/>
    </location>
</feature>
<feature type="active site" description="Pros-phosphohistidine intermediate" evidence="2">
    <location>
        <position position="118"/>
    </location>
</feature>
<feature type="binding site" evidence="1">
    <location>
        <position position="8"/>
    </location>
    <ligand>
        <name>ATP</name>
        <dbReference type="ChEBI" id="CHEBI:30616"/>
    </ligand>
</feature>
<feature type="binding site" evidence="1">
    <location>
        <position position="57"/>
    </location>
    <ligand>
        <name>ATP</name>
        <dbReference type="ChEBI" id="CHEBI:30616"/>
    </ligand>
</feature>
<feature type="binding site" evidence="1">
    <location>
        <position position="85"/>
    </location>
    <ligand>
        <name>ATP</name>
        <dbReference type="ChEBI" id="CHEBI:30616"/>
    </ligand>
</feature>
<feature type="binding site" evidence="1">
    <location>
        <position position="91"/>
    </location>
    <ligand>
        <name>ATP</name>
        <dbReference type="ChEBI" id="CHEBI:30616"/>
    </ligand>
</feature>
<feature type="binding site" evidence="1">
    <location>
        <position position="105"/>
    </location>
    <ligand>
        <name>ATP</name>
        <dbReference type="ChEBI" id="CHEBI:30616"/>
    </ligand>
</feature>
<feature type="binding site" evidence="1">
    <location>
        <position position="115"/>
    </location>
    <ligand>
        <name>ATP</name>
        <dbReference type="ChEBI" id="CHEBI:30616"/>
    </ligand>
</feature>
<feature type="non-terminal residue">
    <location>
        <position position="1"/>
    </location>
</feature>
<sequence length="175" mass="20112">QLTLALIKPDAVAHPLILEAVHQQILSNKFLIVRMRELLWKPEDCRRFYREHEGRFFYQRLVEFMTSGPIRAYILAHKDAIQLWRTLMGPTRVFRARHIAPDSIRGSLGLTDTRNTTHGSDSVVSASREIAAFFPDFSEQRWYEEEEPQLRCGPVHYSPEEGIHCAAETGGPKPA</sequence>